<dbReference type="EMBL" id="CP000246">
    <property type="protein sequence ID" value="ABG84265.1"/>
    <property type="molecule type" value="Genomic_DNA"/>
</dbReference>
<dbReference type="RefSeq" id="WP_003454907.1">
    <property type="nucleotide sequence ID" value="NC_008261.1"/>
</dbReference>
<dbReference type="SMR" id="Q0TNI4"/>
<dbReference type="STRING" id="195103.CPF_2383"/>
<dbReference type="PaxDb" id="195103-CPF_2383"/>
<dbReference type="GeneID" id="93001338"/>
<dbReference type="KEGG" id="cpf:CPF_2383"/>
<dbReference type="eggNOG" id="COG0211">
    <property type="taxonomic scope" value="Bacteria"/>
</dbReference>
<dbReference type="HOGENOM" id="CLU_095424_4_0_9"/>
<dbReference type="Proteomes" id="UP000001823">
    <property type="component" value="Chromosome"/>
</dbReference>
<dbReference type="GO" id="GO:0022625">
    <property type="term" value="C:cytosolic large ribosomal subunit"/>
    <property type="evidence" value="ECO:0007669"/>
    <property type="project" value="TreeGrafter"/>
</dbReference>
<dbReference type="GO" id="GO:0003735">
    <property type="term" value="F:structural constituent of ribosome"/>
    <property type="evidence" value="ECO:0007669"/>
    <property type="project" value="InterPro"/>
</dbReference>
<dbReference type="GO" id="GO:0006412">
    <property type="term" value="P:translation"/>
    <property type="evidence" value="ECO:0007669"/>
    <property type="project" value="UniProtKB-UniRule"/>
</dbReference>
<dbReference type="FunFam" id="2.40.50.100:FF:000004">
    <property type="entry name" value="50S ribosomal protein L27"/>
    <property type="match status" value="1"/>
</dbReference>
<dbReference type="Gene3D" id="2.40.50.100">
    <property type="match status" value="1"/>
</dbReference>
<dbReference type="HAMAP" id="MF_00539">
    <property type="entry name" value="Ribosomal_bL27"/>
    <property type="match status" value="1"/>
</dbReference>
<dbReference type="InterPro" id="IPR001684">
    <property type="entry name" value="Ribosomal_bL27"/>
</dbReference>
<dbReference type="InterPro" id="IPR018261">
    <property type="entry name" value="Ribosomal_bL27_CS"/>
</dbReference>
<dbReference type="NCBIfam" id="TIGR00062">
    <property type="entry name" value="L27"/>
    <property type="match status" value="1"/>
</dbReference>
<dbReference type="PANTHER" id="PTHR15893:SF0">
    <property type="entry name" value="LARGE RIBOSOMAL SUBUNIT PROTEIN BL27M"/>
    <property type="match status" value="1"/>
</dbReference>
<dbReference type="PANTHER" id="PTHR15893">
    <property type="entry name" value="RIBOSOMAL PROTEIN L27"/>
    <property type="match status" value="1"/>
</dbReference>
<dbReference type="Pfam" id="PF01016">
    <property type="entry name" value="Ribosomal_L27"/>
    <property type="match status" value="1"/>
</dbReference>
<dbReference type="PRINTS" id="PR00063">
    <property type="entry name" value="RIBOSOMALL27"/>
</dbReference>
<dbReference type="SUPFAM" id="SSF110324">
    <property type="entry name" value="Ribosomal L27 protein-like"/>
    <property type="match status" value="1"/>
</dbReference>
<dbReference type="PROSITE" id="PS00831">
    <property type="entry name" value="RIBOSOMAL_L27"/>
    <property type="match status" value="1"/>
</dbReference>
<organism>
    <name type="scientific">Clostridium perfringens (strain ATCC 13124 / DSM 756 / JCM 1290 / NCIMB 6125 / NCTC 8237 / Type A)</name>
    <dbReference type="NCBI Taxonomy" id="195103"/>
    <lineage>
        <taxon>Bacteria</taxon>
        <taxon>Bacillati</taxon>
        <taxon>Bacillota</taxon>
        <taxon>Clostridia</taxon>
        <taxon>Eubacteriales</taxon>
        <taxon>Clostridiaceae</taxon>
        <taxon>Clostridium</taxon>
    </lineage>
</organism>
<proteinExistence type="inferred from homology"/>
<evidence type="ECO:0000250" key="1">
    <source>
        <dbReference type="UniProtKB" id="Q2FXT0"/>
    </source>
</evidence>
<evidence type="ECO:0000255" key="2">
    <source>
        <dbReference type="HAMAP-Rule" id="MF_00539"/>
    </source>
</evidence>
<evidence type="ECO:0000305" key="3"/>
<reference key="1">
    <citation type="journal article" date="2006" name="Genome Res.">
        <title>Skewed genomic variability in strains of the toxigenic bacterial pathogen, Clostridium perfringens.</title>
        <authorList>
            <person name="Myers G.S.A."/>
            <person name="Rasko D.A."/>
            <person name="Cheung J.K."/>
            <person name="Ravel J."/>
            <person name="Seshadri R."/>
            <person name="DeBoy R.T."/>
            <person name="Ren Q."/>
            <person name="Varga J."/>
            <person name="Awad M.M."/>
            <person name="Brinkac L.M."/>
            <person name="Daugherty S.C."/>
            <person name="Haft D.H."/>
            <person name="Dodson R.J."/>
            <person name="Madupu R."/>
            <person name="Nelson W.C."/>
            <person name="Rosovitz M.J."/>
            <person name="Sullivan S.A."/>
            <person name="Khouri H."/>
            <person name="Dimitrov G.I."/>
            <person name="Watkins K.L."/>
            <person name="Mulligan S."/>
            <person name="Benton J."/>
            <person name="Radune D."/>
            <person name="Fisher D.J."/>
            <person name="Atkins H.S."/>
            <person name="Hiscox T."/>
            <person name="Jost B.H."/>
            <person name="Billington S.J."/>
            <person name="Songer J.G."/>
            <person name="McClane B.A."/>
            <person name="Titball R.W."/>
            <person name="Rood J.I."/>
            <person name="Melville S.B."/>
            <person name="Paulsen I.T."/>
        </authorList>
    </citation>
    <scope>NUCLEOTIDE SEQUENCE [LARGE SCALE GENOMIC DNA]</scope>
    <source>
        <strain>ATCC 13124 / DSM 756 / JCM 1290 / NCIMB 6125 / NCTC 8237 / S 107 / Type A</strain>
    </source>
</reference>
<keyword id="KW-0687">Ribonucleoprotein</keyword>
<keyword id="KW-0689">Ribosomal protein</keyword>
<comment type="PTM">
    <text evidence="1">The N-terminus is cleaved by ribosomal processing cysteine protease Prp.</text>
</comment>
<comment type="similarity">
    <text evidence="2">Belongs to the bacterial ribosomal protein bL27 family.</text>
</comment>
<protein>
    <recommendedName>
        <fullName evidence="2">Large ribosomal subunit protein bL27</fullName>
    </recommendedName>
    <alternativeName>
        <fullName evidence="3">50S ribosomal protein L27</fullName>
    </alternativeName>
</protein>
<feature type="propeptide" id="PRO_0000459886" evidence="1">
    <location>
        <begin position="1"/>
        <end position="9"/>
    </location>
</feature>
<feature type="chain" id="PRO_1000017457" description="Large ribosomal subunit protein bL27">
    <location>
        <begin position="10"/>
        <end position="100"/>
    </location>
</feature>
<gene>
    <name evidence="2" type="primary">rpmA</name>
    <name type="ordered locus">CPF_2383</name>
</gene>
<name>RL27_CLOP1</name>
<accession>Q0TNI4</accession>
<sequence length="100" mass="10824">MLKMNLQLFAHKKGVGSSKNGRDSEAKRLGVKCADGQFVLAGNILVRQRGTKIHPGANVGKGGDDTLFAKIDGVVKYERLGRDKKKASVYPVNVEEVIAE</sequence>